<feature type="chain" id="PRO_1000118409" description="Peptidyl-tRNA hydrolase">
    <location>
        <begin position="1"/>
        <end position="189"/>
    </location>
</feature>
<feature type="active site" description="Proton acceptor" evidence="1">
    <location>
        <position position="20"/>
    </location>
</feature>
<feature type="binding site" evidence="1">
    <location>
        <position position="15"/>
    </location>
    <ligand>
        <name>tRNA</name>
        <dbReference type="ChEBI" id="CHEBI:17843"/>
    </ligand>
</feature>
<feature type="binding site" evidence="1">
    <location>
        <position position="66"/>
    </location>
    <ligand>
        <name>tRNA</name>
        <dbReference type="ChEBI" id="CHEBI:17843"/>
    </ligand>
</feature>
<feature type="binding site" evidence="1">
    <location>
        <position position="68"/>
    </location>
    <ligand>
        <name>tRNA</name>
        <dbReference type="ChEBI" id="CHEBI:17843"/>
    </ligand>
</feature>
<feature type="binding site" evidence="1">
    <location>
        <position position="114"/>
    </location>
    <ligand>
        <name>tRNA</name>
        <dbReference type="ChEBI" id="CHEBI:17843"/>
    </ligand>
</feature>
<feature type="site" description="Discriminates between blocked and unblocked aminoacyl-tRNA" evidence="1">
    <location>
        <position position="10"/>
    </location>
</feature>
<feature type="site" description="Stabilizes the basic form of H active site to accept a proton" evidence="1">
    <location>
        <position position="93"/>
    </location>
</feature>
<evidence type="ECO:0000255" key="1">
    <source>
        <dbReference type="HAMAP-Rule" id="MF_00083"/>
    </source>
</evidence>
<name>PTH_STRE4</name>
<sequence>MVKMIVGLGNPGSKHQQTKHNVGFMAVDRLVKDLDVSFTEDKTFKALIGSTFINQEKIYFVKPTTFMNNSGLAVRALLTYYNISTKDLMVIYDDLDMAVGKIRLRQKGSAGGHNGIKSIIAHIGTQEFDRVKIGIGRPSHGMSVINHVLGKFDTDDMITINIALDKVDKAINYYLQEKSIEKTMQQFNG</sequence>
<gene>
    <name evidence="1" type="primary">pth</name>
    <name type="ordered locus">SEQ_0006</name>
</gene>
<keyword id="KW-0963">Cytoplasm</keyword>
<keyword id="KW-0378">Hydrolase</keyword>
<keyword id="KW-0694">RNA-binding</keyword>
<keyword id="KW-0820">tRNA-binding</keyword>
<proteinExistence type="inferred from homology"/>
<organism>
    <name type="scientific">Streptococcus equi subsp. equi (strain 4047)</name>
    <dbReference type="NCBI Taxonomy" id="553482"/>
    <lineage>
        <taxon>Bacteria</taxon>
        <taxon>Bacillati</taxon>
        <taxon>Bacillota</taxon>
        <taxon>Bacilli</taxon>
        <taxon>Lactobacillales</taxon>
        <taxon>Streptococcaceae</taxon>
        <taxon>Streptococcus</taxon>
    </lineage>
</organism>
<reference key="1">
    <citation type="journal article" date="2009" name="PLoS Pathog.">
        <title>Genomic evidence for the evolution of Streptococcus equi: host restriction, increased virulence, and genetic exchange with human pathogens.</title>
        <authorList>
            <person name="Holden M.T.G."/>
            <person name="Heather Z."/>
            <person name="Paillot R."/>
            <person name="Steward K.F."/>
            <person name="Webb K."/>
            <person name="Ainslie F."/>
            <person name="Jourdan T."/>
            <person name="Bason N.C."/>
            <person name="Holroyd N.E."/>
            <person name="Mungall K."/>
            <person name="Quail M.A."/>
            <person name="Sanders M."/>
            <person name="Simmonds M."/>
            <person name="Willey D."/>
            <person name="Brooks K."/>
            <person name="Aanensen D.M."/>
            <person name="Spratt B.G."/>
            <person name="Jolley K.A."/>
            <person name="Maiden M.C.J."/>
            <person name="Kehoe M."/>
            <person name="Chanter N."/>
            <person name="Bentley S.D."/>
            <person name="Robinson C."/>
            <person name="Maskell D.J."/>
            <person name="Parkhill J."/>
            <person name="Waller A.S."/>
        </authorList>
    </citation>
    <scope>NUCLEOTIDE SEQUENCE [LARGE SCALE GENOMIC DNA]</scope>
    <source>
        <strain>4047</strain>
    </source>
</reference>
<dbReference type="EC" id="3.1.1.29" evidence="1"/>
<dbReference type="EMBL" id="FM204883">
    <property type="protein sequence ID" value="CAW91882.1"/>
    <property type="molecule type" value="Genomic_DNA"/>
</dbReference>
<dbReference type="RefSeq" id="WP_012678757.1">
    <property type="nucleotide sequence ID" value="NC_012471.1"/>
</dbReference>
<dbReference type="SMR" id="C0M9G4"/>
<dbReference type="KEGG" id="seu:SEQ_0006"/>
<dbReference type="HOGENOM" id="CLU_062456_4_1_9"/>
<dbReference type="OrthoDB" id="9800507at2"/>
<dbReference type="Proteomes" id="UP000001365">
    <property type="component" value="Chromosome"/>
</dbReference>
<dbReference type="GO" id="GO:0005737">
    <property type="term" value="C:cytoplasm"/>
    <property type="evidence" value="ECO:0007669"/>
    <property type="project" value="UniProtKB-SubCell"/>
</dbReference>
<dbReference type="GO" id="GO:0004045">
    <property type="term" value="F:peptidyl-tRNA hydrolase activity"/>
    <property type="evidence" value="ECO:0007669"/>
    <property type="project" value="UniProtKB-UniRule"/>
</dbReference>
<dbReference type="GO" id="GO:0000049">
    <property type="term" value="F:tRNA binding"/>
    <property type="evidence" value="ECO:0007669"/>
    <property type="project" value="UniProtKB-UniRule"/>
</dbReference>
<dbReference type="GO" id="GO:0006515">
    <property type="term" value="P:protein quality control for misfolded or incompletely synthesized proteins"/>
    <property type="evidence" value="ECO:0007669"/>
    <property type="project" value="UniProtKB-UniRule"/>
</dbReference>
<dbReference type="GO" id="GO:0072344">
    <property type="term" value="P:rescue of stalled ribosome"/>
    <property type="evidence" value="ECO:0007669"/>
    <property type="project" value="UniProtKB-UniRule"/>
</dbReference>
<dbReference type="CDD" id="cd00462">
    <property type="entry name" value="PTH"/>
    <property type="match status" value="1"/>
</dbReference>
<dbReference type="FunFam" id="3.40.50.1470:FF:000001">
    <property type="entry name" value="Peptidyl-tRNA hydrolase"/>
    <property type="match status" value="1"/>
</dbReference>
<dbReference type="Gene3D" id="3.40.50.1470">
    <property type="entry name" value="Peptidyl-tRNA hydrolase"/>
    <property type="match status" value="1"/>
</dbReference>
<dbReference type="HAMAP" id="MF_00083">
    <property type="entry name" value="Pept_tRNA_hydro_bact"/>
    <property type="match status" value="1"/>
</dbReference>
<dbReference type="InterPro" id="IPR001328">
    <property type="entry name" value="Pept_tRNA_hydro"/>
</dbReference>
<dbReference type="InterPro" id="IPR018171">
    <property type="entry name" value="Pept_tRNA_hydro_CS"/>
</dbReference>
<dbReference type="InterPro" id="IPR036416">
    <property type="entry name" value="Pept_tRNA_hydro_sf"/>
</dbReference>
<dbReference type="NCBIfam" id="TIGR00447">
    <property type="entry name" value="pth"/>
    <property type="match status" value="1"/>
</dbReference>
<dbReference type="PANTHER" id="PTHR17224">
    <property type="entry name" value="PEPTIDYL-TRNA HYDROLASE"/>
    <property type="match status" value="1"/>
</dbReference>
<dbReference type="PANTHER" id="PTHR17224:SF1">
    <property type="entry name" value="PEPTIDYL-TRNA HYDROLASE"/>
    <property type="match status" value="1"/>
</dbReference>
<dbReference type="Pfam" id="PF01195">
    <property type="entry name" value="Pept_tRNA_hydro"/>
    <property type="match status" value="1"/>
</dbReference>
<dbReference type="SUPFAM" id="SSF53178">
    <property type="entry name" value="Peptidyl-tRNA hydrolase-like"/>
    <property type="match status" value="1"/>
</dbReference>
<dbReference type="PROSITE" id="PS01195">
    <property type="entry name" value="PEPT_TRNA_HYDROL_1"/>
    <property type="match status" value="1"/>
</dbReference>
<dbReference type="PROSITE" id="PS01196">
    <property type="entry name" value="PEPT_TRNA_HYDROL_2"/>
    <property type="match status" value="1"/>
</dbReference>
<comment type="function">
    <text evidence="1">Hydrolyzes ribosome-free peptidyl-tRNAs (with 1 or more amino acids incorporated), which drop off the ribosome during protein synthesis, or as a result of ribosome stalling.</text>
</comment>
<comment type="function">
    <text evidence="1">Catalyzes the release of premature peptidyl moieties from peptidyl-tRNA molecules trapped in stalled 50S ribosomal subunits, and thus maintains levels of free tRNAs and 50S ribosomes.</text>
</comment>
<comment type="catalytic activity">
    <reaction evidence="1">
        <text>an N-acyl-L-alpha-aminoacyl-tRNA + H2O = an N-acyl-L-amino acid + a tRNA + H(+)</text>
        <dbReference type="Rhea" id="RHEA:54448"/>
        <dbReference type="Rhea" id="RHEA-COMP:10123"/>
        <dbReference type="Rhea" id="RHEA-COMP:13883"/>
        <dbReference type="ChEBI" id="CHEBI:15377"/>
        <dbReference type="ChEBI" id="CHEBI:15378"/>
        <dbReference type="ChEBI" id="CHEBI:59874"/>
        <dbReference type="ChEBI" id="CHEBI:78442"/>
        <dbReference type="ChEBI" id="CHEBI:138191"/>
        <dbReference type="EC" id="3.1.1.29"/>
    </reaction>
</comment>
<comment type="subunit">
    <text evidence="1">Monomer.</text>
</comment>
<comment type="subcellular location">
    <subcellularLocation>
        <location evidence="1">Cytoplasm</location>
    </subcellularLocation>
</comment>
<comment type="similarity">
    <text evidence="1">Belongs to the PTH family.</text>
</comment>
<protein>
    <recommendedName>
        <fullName evidence="1">Peptidyl-tRNA hydrolase</fullName>
        <shortName evidence="1">Pth</shortName>
        <ecNumber evidence="1">3.1.1.29</ecNumber>
    </recommendedName>
</protein>
<accession>C0M9G4</accession>